<protein>
    <recommendedName>
        <fullName evidence="1">DNA-directed RNA polymerase subunit beta'</fullName>
        <shortName evidence="1">RNAP subunit beta'</shortName>
        <ecNumber evidence="1">2.7.7.6</ecNumber>
    </recommendedName>
    <alternativeName>
        <fullName evidence="1">RNA polymerase subunit beta'</fullName>
    </alternativeName>
    <alternativeName>
        <fullName evidence="1">Transcriptase subunit beta'</fullName>
    </alternativeName>
</protein>
<name>RPOC_STRP7</name>
<gene>
    <name evidence="1" type="primary">rpoC</name>
    <name type="ordered locus">SP70585_2031</name>
</gene>
<comment type="function">
    <text evidence="1">DNA-dependent RNA polymerase catalyzes the transcription of DNA into RNA using the four ribonucleoside triphosphates as substrates.</text>
</comment>
<comment type="catalytic activity">
    <reaction evidence="1">
        <text>RNA(n) + a ribonucleoside 5'-triphosphate = RNA(n+1) + diphosphate</text>
        <dbReference type="Rhea" id="RHEA:21248"/>
        <dbReference type="Rhea" id="RHEA-COMP:14527"/>
        <dbReference type="Rhea" id="RHEA-COMP:17342"/>
        <dbReference type="ChEBI" id="CHEBI:33019"/>
        <dbReference type="ChEBI" id="CHEBI:61557"/>
        <dbReference type="ChEBI" id="CHEBI:140395"/>
        <dbReference type="EC" id="2.7.7.6"/>
    </reaction>
</comment>
<comment type="cofactor">
    <cofactor evidence="1">
        <name>Mg(2+)</name>
        <dbReference type="ChEBI" id="CHEBI:18420"/>
    </cofactor>
    <text evidence="1">Binds 1 Mg(2+) ion per subunit.</text>
</comment>
<comment type="cofactor">
    <cofactor evidence="1">
        <name>Zn(2+)</name>
        <dbReference type="ChEBI" id="CHEBI:29105"/>
    </cofactor>
    <text evidence="1">Binds 2 Zn(2+) ions per subunit.</text>
</comment>
<comment type="subunit">
    <text evidence="1">The RNAP catalytic core consists of 2 alpha, 1 beta, 1 beta' and 1 omega subunit. When a sigma factor is associated with the core the holoenzyme is formed, which can initiate transcription.</text>
</comment>
<comment type="similarity">
    <text evidence="1">Belongs to the RNA polymerase beta' chain family.</text>
</comment>
<proteinExistence type="inferred from homology"/>
<keyword id="KW-0240">DNA-directed RNA polymerase</keyword>
<keyword id="KW-0460">Magnesium</keyword>
<keyword id="KW-0479">Metal-binding</keyword>
<keyword id="KW-0548">Nucleotidyltransferase</keyword>
<keyword id="KW-0804">Transcription</keyword>
<keyword id="KW-0808">Transferase</keyword>
<keyword id="KW-0862">Zinc</keyword>
<evidence type="ECO:0000255" key="1">
    <source>
        <dbReference type="HAMAP-Rule" id="MF_01322"/>
    </source>
</evidence>
<sequence>MVDVNRFKSMQITLASPSKVRSWSYGEVKKPETINYRTLKPEREGLFDEVIFGPTKDWECACGKYKRIRYRGIVCDRCGVEVTRTKVRRERMGHIELKAPVSHIWYFKGIPSRMGLTLDMSPRALEEVIYFAAYVVIDPKDTPLEHKSIMTEREYRERLREYGYGSFVAKMGAEAIQDLLKQVDLEKEIAELKEELKTATGQKRVKAIRRLDVLDAFYKSGNKPEWMILNILPVIPPDLRPMLQLDGGRFASSDLNDLYRRVINRNNRLARLLELNAPGIIVQNEKRMLQEAVDALIDNGRRGRPITGPGSRPLKSLSHMLKGKQGRFRQNLLGKRVDFSGRSVIAVGPTLKMYQCGVPREMAIELFKPFVMREIVARDIVQNVKAAKRLVERGDERIWDILEEVIKEHPVLLNRAPTLHRLGIQAFEPVLIDGKALRLHPLVCEAYNADFDGDQMAIHVPLSEEAQAEARILMLAAEHILNPKDGKPVVTPSQDMVLGNYYLTMEEAGREGEGMVFKDRDEAVMAYRNGYVHLHSRVGIATDSLNKPWTEEQRHKVLLTTVGKILFNDIMPEGLPYLQEPNNANLTEGVPAKYFLPLGGDIKEAISNLELNPPFKKKNLGNIIAEIFKRFRTTETSALLDRMKNLGYHHSTLAGLTVGIADIPVVDDKAEIIEESHKRVEQITKQFRRGMITDDERYNAVTAEWRAAREKLEKRLIANQDPKNPIVMMMDSGARGNISNFSQLAGMRGLMAAPNGRIMELPILSNFREGLSVLEMFFSTHGARKGMTDTALKTADSGYLTRRLVDVAQDVIIREDDCGTDRGLLIRSIAEGKEMIESLEERLNGRYTKKTVKHPETGAVIIGPNELITEDKAREIVNAGVEEVTIRSVFTCNTRHGVCRHCYGINLATGDAVEVGEAVGTIAAQSIGEPGTQLTMRTFHTGGVASNTDITQGLPRVQEIFEARNPKGEAVITEVKGQVTAIEEDASTRTKKVFVKGETGEGEYVVPFTARMRVEVGGQVARGAALTEGSIQPKRLLAVRDVLSVETYLLGEVQKVYRSQGVEIGDKHIEVMVRQMIRKVRVMDPGDTDLLMGTLMDINDFTDANKDVLIAGGVPATGRPVLMGITKASLETNSFLSAASFQETTRVLTDAAIRGKKDHLLGLKENVIIGKIIPAGTGMARYRNLEPHAVNEEEYLNPPVEEEGNEETTEVVVDTAVETVEETVE</sequence>
<dbReference type="EC" id="2.7.7.6" evidence="1"/>
<dbReference type="EMBL" id="CP000918">
    <property type="protein sequence ID" value="ACO17990.1"/>
    <property type="molecule type" value="Genomic_DNA"/>
</dbReference>
<dbReference type="RefSeq" id="WP_000228766.1">
    <property type="nucleotide sequence ID" value="NC_012468.1"/>
</dbReference>
<dbReference type="SMR" id="C1CA05"/>
<dbReference type="KEGG" id="snm:SP70585_2031"/>
<dbReference type="HOGENOM" id="CLU_000524_3_1_9"/>
<dbReference type="Proteomes" id="UP000002211">
    <property type="component" value="Chromosome"/>
</dbReference>
<dbReference type="GO" id="GO:0000428">
    <property type="term" value="C:DNA-directed RNA polymerase complex"/>
    <property type="evidence" value="ECO:0007669"/>
    <property type="project" value="UniProtKB-KW"/>
</dbReference>
<dbReference type="GO" id="GO:0003677">
    <property type="term" value="F:DNA binding"/>
    <property type="evidence" value="ECO:0007669"/>
    <property type="project" value="UniProtKB-UniRule"/>
</dbReference>
<dbReference type="GO" id="GO:0003899">
    <property type="term" value="F:DNA-directed RNA polymerase activity"/>
    <property type="evidence" value="ECO:0007669"/>
    <property type="project" value="UniProtKB-UniRule"/>
</dbReference>
<dbReference type="GO" id="GO:0000287">
    <property type="term" value="F:magnesium ion binding"/>
    <property type="evidence" value="ECO:0007669"/>
    <property type="project" value="UniProtKB-UniRule"/>
</dbReference>
<dbReference type="GO" id="GO:0008270">
    <property type="term" value="F:zinc ion binding"/>
    <property type="evidence" value="ECO:0007669"/>
    <property type="project" value="UniProtKB-UniRule"/>
</dbReference>
<dbReference type="GO" id="GO:0006351">
    <property type="term" value="P:DNA-templated transcription"/>
    <property type="evidence" value="ECO:0007669"/>
    <property type="project" value="UniProtKB-UniRule"/>
</dbReference>
<dbReference type="CDD" id="cd02655">
    <property type="entry name" value="RNAP_beta'_C"/>
    <property type="match status" value="1"/>
</dbReference>
<dbReference type="CDD" id="cd01609">
    <property type="entry name" value="RNAP_beta'_N"/>
    <property type="match status" value="1"/>
</dbReference>
<dbReference type="FunFam" id="1.10.150.390:FF:000002">
    <property type="entry name" value="DNA-directed RNA polymerase subunit beta"/>
    <property type="match status" value="1"/>
</dbReference>
<dbReference type="FunFam" id="4.10.860.120:FF:000001">
    <property type="entry name" value="DNA-directed RNA polymerase subunit beta"/>
    <property type="match status" value="1"/>
</dbReference>
<dbReference type="Gene3D" id="1.10.132.30">
    <property type="match status" value="1"/>
</dbReference>
<dbReference type="Gene3D" id="1.10.150.390">
    <property type="match status" value="1"/>
</dbReference>
<dbReference type="Gene3D" id="1.10.1790.20">
    <property type="match status" value="1"/>
</dbReference>
<dbReference type="Gene3D" id="1.10.40.90">
    <property type="match status" value="1"/>
</dbReference>
<dbReference type="Gene3D" id="2.40.40.20">
    <property type="match status" value="1"/>
</dbReference>
<dbReference type="Gene3D" id="2.40.50.100">
    <property type="match status" value="1"/>
</dbReference>
<dbReference type="Gene3D" id="4.10.860.120">
    <property type="entry name" value="RNA polymerase II, clamp domain"/>
    <property type="match status" value="1"/>
</dbReference>
<dbReference type="Gene3D" id="1.10.274.100">
    <property type="entry name" value="RNA polymerase Rpb1, domain 3"/>
    <property type="match status" value="1"/>
</dbReference>
<dbReference type="HAMAP" id="MF_01322">
    <property type="entry name" value="RNApol_bact_RpoC"/>
    <property type="match status" value="1"/>
</dbReference>
<dbReference type="InterPro" id="IPR045867">
    <property type="entry name" value="DNA-dir_RpoC_beta_prime"/>
</dbReference>
<dbReference type="InterPro" id="IPR012754">
    <property type="entry name" value="DNA-dir_RpoC_beta_prime_bact"/>
</dbReference>
<dbReference type="InterPro" id="IPR000722">
    <property type="entry name" value="RNA_pol_asu"/>
</dbReference>
<dbReference type="InterPro" id="IPR006592">
    <property type="entry name" value="RNA_pol_N"/>
</dbReference>
<dbReference type="InterPro" id="IPR007080">
    <property type="entry name" value="RNA_pol_Rpb1_1"/>
</dbReference>
<dbReference type="InterPro" id="IPR007066">
    <property type="entry name" value="RNA_pol_Rpb1_3"/>
</dbReference>
<dbReference type="InterPro" id="IPR042102">
    <property type="entry name" value="RNA_pol_Rpb1_3_sf"/>
</dbReference>
<dbReference type="InterPro" id="IPR007083">
    <property type="entry name" value="RNA_pol_Rpb1_4"/>
</dbReference>
<dbReference type="InterPro" id="IPR007081">
    <property type="entry name" value="RNA_pol_Rpb1_5"/>
</dbReference>
<dbReference type="InterPro" id="IPR044893">
    <property type="entry name" value="RNA_pol_Rpb1_clamp_domain"/>
</dbReference>
<dbReference type="InterPro" id="IPR038120">
    <property type="entry name" value="Rpb1_funnel_sf"/>
</dbReference>
<dbReference type="NCBIfam" id="TIGR02386">
    <property type="entry name" value="rpoC_TIGR"/>
    <property type="match status" value="1"/>
</dbReference>
<dbReference type="PANTHER" id="PTHR19376">
    <property type="entry name" value="DNA-DIRECTED RNA POLYMERASE"/>
    <property type="match status" value="1"/>
</dbReference>
<dbReference type="PANTHER" id="PTHR19376:SF54">
    <property type="entry name" value="DNA-DIRECTED RNA POLYMERASE SUBUNIT BETA"/>
    <property type="match status" value="1"/>
</dbReference>
<dbReference type="Pfam" id="PF04997">
    <property type="entry name" value="RNA_pol_Rpb1_1"/>
    <property type="match status" value="1"/>
</dbReference>
<dbReference type="Pfam" id="PF00623">
    <property type="entry name" value="RNA_pol_Rpb1_2"/>
    <property type="match status" value="2"/>
</dbReference>
<dbReference type="Pfam" id="PF04983">
    <property type="entry name" value="RNA_pol_Rpb1_3"/>
    <property type="match status" value="1"/>
</dbReference>
<dbReference type="Pfam" id="PF05000">
    <property type="entry name" value="RNA_pol_Rpb1_4"/>
    <property type="match status" value="1"/>
</dbReference>
<dbReference type="Pfam" id="PF04998">
    <property type="entry name" value="RNA_pol_Rpb1_5"/>
    <property type="match status" value="1"/>
</dbReference>
<dbReference type="SMART" id="SM00663">
    <property type="entry name" value="RPOLA_N"/>
    <property type="match status" value="1"/>
</dbReference>
<dbReference type="SUPFAM" id="SSF64484">
    <property type="entry name" value="beta and beta-prime subunits of DNA dependent RNA-polymerase"/>
    <property type="match status" value="1"/>
</dbReference>
<reference key="1">
    <citation type="journal article" date="2010" name="Genome Biol.">
        <title>Structure and dynamics of the pan-genome of Streptococcus pneumoniae and closely related species.</title>
        <authorList>
            <person name="Donati C."/>
            <person name="Hiller N.L."/>
            <person name="Tettelin H."/>
            <person name="Muzzi A."/>
            <person name="Croucher N.J."/>
            <person name="Angiuoli S.V."/>
            <person name="Oggioni M."/>
            <person name="Dunning Hotopp J.C."/>
            <person name="Hu F.Z."/>
            <person name="Riley D.R."/>
            <person name="Covacci A."/>
            <person name="Mitchell T.J."/>
            <person name="Bentley S.D."/>
            <person name="Kilian M."/>
            <person name="Ehrlich G.D."/>
            <person name="Rappuoli R."/>
            <person name="Moxon E.R."/>
            <person name="Masignani V."/>
        </authorList>
    </citation>
    <scope>NUCLEOTIDE SEQUENCE [LARGE SCALE GENOMIC DNA]</scope>
    <source>
        <strain>70585</strain>
    </source>
</reference>
<feature type="chain" id="PRO_1000165850" description="DNA-directed RNA polymerase subunit beta'">
    <location>
        <begin position="1"/>
        <end position="1225"/>
    </location>
</feature>
<feature type="binding site" evidence="1">
    <location>
        <position position="60"/>
    </location>
    <ligand>
        <name>Zn(2+)</name>
        <dbReference type="ChEBI" id="CHEBI:29105"/>
        <label>1</label>
    </ligand>
</feature>
<feature type="binding site" evidence="1">
    <location>
        <position position="62"/>
    </location>
    <ligand>
        <name>Zn(2+)</name>
        <dbReference type="ChEBI" id="CHEBI:29105"/>
        <label>1</label>
    </ligand>
</feature>
<feature type="binding site" evidence="1">
    <location>
        <position position="75"/>
    </location>
    <ligand>
        <name>Zn(2+)</name>
        <dbReference type="ChEBI" id="CHEBI:29105"/>
        <label>1</label>
    </ligand>
</feature>
<feature type="binding site" evidence="1">
    <location>
        <position position="78"/>
    </location>
    <ligand>
        <name>Zn(2+)</name>
        <dbReference type="ChEBI" id="CHEBI:29105"/>
        <label>1</label>
    </ligand>
</feature>
<feature type="binding site" evidence="1">
    <location>
        <position position="450"/>
    </location>
    <ligand>
        <name>Mg(2+)</name>
        <dbReference type="ChEBI" id="CHEBI:18420"/>
    </ligand>
</feature>
<feature type="binding site" evidence="1">
    <location>
        <position position="452"/>
    </location>
    <ligand>
        <name>Mg(2+)</name>
        <dbReference type="ChEBI" id="CHEBI:18420"/>
    </ligand>
</feature>
<feature type="binding site" evidence="1">
    <location>
        <position position="454"/>
    </location>
    <ligand>
        <name>Mg(2+)</name>
        <dbReference type="ChEBI" id="CHEBI:18420"/>
    </ligand>
</feature>
<feature type="binding site" evidence="1">
    <location>
        <position position="818"/>
    </location>
    <ligand>
        <name>Zn(2+)</name>
        <dbReference type="ChEBI" id="CHEBI:29105"/>
        <label>2</label>
    </ligand>
</feature>
<feature type="binding site" evidence="1">
    <location>
        <position position="892"/>
    </location>
    <ligand>
        <name>Zn(2+)</name>
        <dbReference type="ChEBI" id="CHEBI:29105"/>
        <label>2</label>
    </ligand>
</feature>
<feature type="binding site" evidence="1">
    <location>
        <position position="899"/>
    </location>
    <ligand>
        <name>Zn(2+)</name>
        <dbReference type="ChEBI" id="CHEBI:29105"/>
        <label>2</label>
    </ligand>
</feature>
<feature type="binding site" evidence="1">
    <location>
        <position position="902"/>
    </location>
    <ligand>
        <name>Zn(2+)</name>
        <dbReference type="ChEBI" id="CHEBI:29105"/>
        <label>2</label>
    </ligand>
</feature>
<organism>
    <name type="scientific">Streptococcus pneumoniae (strain 70585)</name>
    <dbReference type="NCBI Taxonomy" id="488221"/>
    <lineage>
        <taxon>Bacteria</taxon>
        <taxon>Bacillati</taxon>
        <taxon>Bacillota</taxon>
        <taxon>Bacilli</taxon>
        <taxon>Lactobacillales</taxon>
        <taxon>Streptococcaceae</taxon>
        <taxon>Streptococcus</taxon>
    </lineage>
</organism>
<accession>C1CA05</accession>